<accession>O34098</accession>
<sequence>MDRDIKYEEVLAQIKLYIKDEATLKEIQKAYEYAEEKHHGQVRNSGARYIIHPLWTTFFLAQWRMGPKTLIAGLLHDVLEDTPATFEELQELFGIEIANLVEGVTKVSYFAKENRTQIKAQYLRKLYLSMAKDIRVIIVKLADRLHNLKTIGYLKPERQQIIARESLEIYSAIAHRLGMKAVKQEIEDISFKIINPVQYNKIVSLLESSNKERENTINQKIEELKKILITEKKMSVKVYGRSKSIYSIYRKMNQFGKNFDDIHDILAVRIITNSVDDCYKVLGFVHQHYTPLNNRFKDYIATPKHNLYQSLHTTIVADDGLIFEVQIRTEEMDELAEQGVAAHWRYKEGENYDIAKKQKDIDERLDIFKRILDLENISVQERDEIQQEVYKPDHLMEQIIQNDIFSSLIYVLTPNGKVVTLPFGSTVLDFAYKIHSEIGEKTIGAKINGLFSPISTVLKSGDVVDIKTAATQKPNHSWLVVSKTSSALEKIKKYLKKELVEVTSDAKSVNLEKIKQTKSQIEEYIAKKDLKWKLVNSETQLERLHAINFNNIEDFLLDVANDEYTLEEAINLVYLDHETSQNEKILKKLQDKQYKKAQLKDDIIVQGISNIKVVISQCCLPIPYEDITGYVSKAEGIKVHLKTCRNIQSGDKQDRQVEVSWNEAVCKNKQYDCAIRIEAIDRPALLVDVTKVLSHLNASVQMMSANVSGDLMNLTIKTIIKVSNADRLQQIRSSLLTIPDIKVVERVMM</sequence>
<comment type="function">
    <text evidence="1">In eubacteria ppGpp (guanosine 3'-diphosphate 5'-diphosphate) is a mediator of the stringent response that coordinates a variety of cellular activities in response to changes in nutritional abundance. This enzyme catalyzes the degradation of ppGpp into GDP. It may also be capable of catalyzing the synthesis of ppGpp (By similarity).</text>
</comment>
<comment type="catalytic activity">
    <reaction>
        <text>guanosine 3',5'-bis(diphosphate) + H2O = GDP + diphosphate + H(+)</text>
        <dbReference type="Rhea" id="RHEA:14253"/>
        <dbReference type="ChEBI" id="CHEBI:15377"/>
        <dbReference type="ChEBI" id="CHEBI:15378"/>
        <dbReference type="ChEBI" id="CHEBI:33019"/>
        <dbReference type="ChEBI" id="CHEBI:58189"/>
        <dbReference type="ChEBI" id="CHEBI:77828"/>
        <dbReference type="EC" id="3.1.7.2"/>
    </reaction>
</comment>
<comment type="cofactor">
    <cofactor evidence="1">
        <name>Mn(2+)</name>
        <dbReference type="ChEBI" id="CHEBI:29035"/>
    </cofactor>
</comment>
<comment type="pathway">
    <text>Purine metabolism; ppGpp biosynthesis; ppGpp from GDP: step 1/1.</text>
</comment>
<comment type="similarity">
    <text evidence="5">Belongs to the RelA/SpoT family.</text>
</comment>
<name>SPOT_SPICI</name>
<proteinExistence type="inferred from homology"/>
<gene>
    <name type="primary">spoT</name>
</gene>
<reference key="1">
    <citation type="journal article" date="1997" name="J. Bacteriol.">
        <title>Isolation, characterization, and complementation of a motility mutant of Spiroplasma citri.</title>
        <authorList>
            <person name="Jacob C."/>
            <person name="Nouzieres F."/>
            <person name="Duret S."/>
            <person name="Bove J.M."/>
            <person name="Renaudin J."/>
        </authorList>
    </citation>
    <scope>NUCLEOTIDE SEQUENCE [GENOMIC DNA]</scope>
    <source>
        <strain>GII-3</strain>
    </source>
</reference>
<feature type="chain" id="PRO_0000166575" description="Guanosine-3',5'-bis(diphosphate) 3'-pyrophosphohydrolase">
    <location>
        <begin position="1"/>
        <end position="749"/>
    </location>
</feature>
<feature type="domain" description="HD" evidence="3">
    <location>
        <begin position="49"/>
        <end position="148"/>
    </location>
</feature>
<feature type="domain" description="TGS" evidence="4">
    <location>
        <begin position="407"/>
        <end position="468"/>
    </location>
</feature>
<feature type="domain" description="ACT" evidence="2">
    <location>
        <begin position="674"/>
        <end position="749"/>
    </location>
</feature>
<evidence type="ECO:0000250" key="1"/>
<evidence type="ECO:0000255" key="2">
    <source>
        <dbReference type="PROSITE-ProRule" id="PRU01007"/>
    </source>
</evidence>
<evidence type="ECO:0000255" key="3">
    <source>
        <dbReference type="PROSITE-ProRule" id="PRU01175"/>
    </source>
</evidence>
<evidence type="ECO:0000255" key="4">
    <source>
        <dbReference type="PROSITE-ProRule" id="PRU01228"/>
    </source>
</evidence>
<evidence type="ECO:0000305" key="5"/>
<keyword id="KW-0378">Hydrolase</keyword>
<keyword id="KW-0464">Manganese</keyword>
<protein>
    <recommendedName>
        <fullName>Guanosine-3',5'-bis(diphosphate) 3'-pyrophosphohydrolase</fullName>
        <ecNumber>3.1.7.2</ecNumber>
    </recommendedName>
    <alternativeName>
        <fullName>Penta-phosphate guanosine-3'-pyrophosphohydrolase</fullName>
        <shortName>(ppGpp)ase</shortName>
    </alternativeName>
</protein>
<organism>
    <name type="scientific">Spiroplasma citri</name>
    <dbReference type="NCBI Taxonomy" id="2133"/>
    <lineage>
        <taxon>Bacteria</taxon>
        <taxon>Bacillati</taxon>
        <taxon>Mycoplasmatota</taxon>
        <taxon>Mollicutes</taxon>
        <taxon>Entomoplasmatales</taxon>
        <taxon>Spiroplasmataceae</taxon>
        <taxon>Spiroplasma</taxon>
    </lineage>
</organism>
<dbReference type="EC" id="3.1.7.2"/>
<dbReference type="EMBL" id="U89875">
    <property type="protein sequence ID" value="AAC45548.1"/>
    <property type="molecule type" value="Genomic_DNA"/>
</dbReference>
<dbReference type="SMR" id="O34098"/>
<dbReference type="STRING" id="2133.SCITRI_00787"/>
<dbReference type="UniPathway" id="UPA00908">
    <property type="reaction ID" value="UER00886"/>
</dbReference>
<dbReference type="GO" id="GO:0005886">
    <property type="term" value="C:plasma membrane"/>
    <property type="evidence" value="ECO:0007669"/>
    <property type="project" value="TreeGrafter"/>
</dbReference>
<dbReference type="GO" id="GO:0008893">
    <property type="term" value="F:guanosine-3',5'-bis(diphosphate) 3'-diphosphatase activity"/>
    <property type="evidence" value="ECO:0007669"/>
    <property type="project" value="UniProtKB-EC"/>
</dbReference>
<dbReference type="GO" id="GO:0015970">
    <property type="term" value="P:guanosine tetraphosphate biosynthetic process"/>
    <property type="evidence" value="ECO:0007669"/>
    <property type="project" value="UniProtKB-UniPathway"/>
</dbReference>
<dbReference type="CDD" id="cd04876">
    <property type="entry name" value="ACT_RelA-SpoT"/>
    <property type="match status" value="1"/>
</dbReference>
<dbReference type="CDD" id="cd00077">
    <property type="entry name" value="HDc"/>
    <property type="match status" value="1"/>
</dbReference>
<dbReference type="CDD" id="cd05399">
    <property type="entry name" value="NT_Rel-Spo_like"/>
    <property type="match status" value="1"/>
</dbReference>
<dbReference type="CDD" id="cd01668">
    <property type="entry name" value="TGS_RSH"/>
    <property type="match status" value="1"/>
</dbReference>
<dbReference type="FunFam" id="3.10.20.30:FF:000002">
    <property type="entry name" value="GTP pyrophosphokinase (RelA/SpoT)"/>
    <property type="match status" value="1"/>
</dbReference>
<dbReference type="FunFam" id="1.10.3210.10:FF:000001">
    <property type="entry name" value="GTP pyrophosphokinase RelA"/>
    <property type="match status" value="1"/>
</dbReference>
<dbReference type="FunFam" id="3.30.460.10:FF:000001">
    <property type="entry name" value="GTP pyrophosphokinase RelA"/>
    <property type="match status" value="1"/>
</dbReference>
<dbReference type="Gene3D" id="3.10.20.30">
    <property type="match status" value="1"/>
</dbReference>
<dbReference type="Gene3D" id="3.30.70.260">
    <property type="match status" value="1"/>
</dbReference>
<dbReference type="Gene3D" id="3.30.460.10">
    <property type="entry name" value="Beta Polymerase, domain 2"/>
    <property type="match status" value="1"/>
</dbReference>
<dbReference type="Gene3D" id="1.10.3210.10">
    <property type="entry name" value="Hypothetical protein af1432"/>
    <property type="match status" value="1"/>
</dbReference>
<dbReference type="InterPro" id="IPR045865">
    <property type="entry name" value="ACT-like_dom_sf"/>
</dbReference>
<dbReference type="InterPro" id="IPR002912">
    <property type="entry name" value="ACT_dom"/>
</dbReference>
<dbReference type="InterPro" id="IPR012675">
    <property type="entry name" value="Beta-grasp_dom_sf"/>
</dbReference>
<dbReference type="InterPro" id="IPR003607">
    <property type="entry name" value="HD/PDEase_dom"/>
</dbReference>
<dbReference type="InterPro" id="IPR006674">
    <property type="entry name" value="HD_domain"/>
</dbReference>
<dbReference type="InterPro" id="IPR043519">
    <property type="entry name" value="NT_sf"/>
</dbReference>
<dbReference type="InterPro" id="IPR004811">
    <property type="entry name" value="RelA/Spo_fam"/>
</dbReference>
<dbReference type="InterPro" id="IPR007685">
    <property type="entry name" value="RelA_SpoT"/>
</dbReference>
<dbReference type="InterPro" id="IPR004095">
    <property type="entry name" value="TGS"/>
</dbReference>
<dbReference type="InterPro" id="IPR012676">
    <property type="entry name" value="TGS-like"/>
</dbReference>
<dbReference type="InterPro" id="IPR033655">
    <property type="entry name" value="TGS_RelA/SpoT"/>
</dbReference>
<dbReference type="NCBIfam" id="TIGR00691">
    <property type="entry name" value="spoT_relA"/>
    <property type="match status" value="1"/>
</dbReference>
<dbReference type="PANTHER" id="PTHR21262:SF31">
    <property type="entry name" value="GTP PYROPHOSPHOKINASE"/>
    <property type="match status" value="1"/>
</dbReference>
<dbReference type="PANTHER" id="PTHR21262">
    <property type="entry name" value="GUANOSINE-3',5'-BIS DIPHOSPHATE 3'-PYROPHOSPHOHYDROLASE"/>
    <property type="match status" value="1"/>
</dbReference>
<dbReference type="Pfam" id="PF13291">
    <property type="entry name" value="ACT_4"/>
    <property type="match status" value="1"/>
</dbReference>
<dbReference type="Pfam" id="PF13328">
    <property type="entry name" value="HD_4"/>
    <property type="match status" value="1"/>
</dbReference>
<dbReference type="Pfam" id="PF04607">
    <property type="entry name" value="RelA_SpoT"/>
    <property type="match status" value="1"/>
</dbReference>
<dbReference type="Pfam" id="PF02824">
    <property type="entry name" value="TGS"/>
    <property type="match status" value="1"/>
</dbReference>
<dbReference type="SMART" id="SM00471">
    <property type="entry name" value="HDc"/>
    <property type="match status" value="1"/>
</dbReference>
<dbReference type="SMART" id="SM00954">
    <property type="entry name" value="RelA_SpoT"/>
    <property type="match status" value="1"/>
</dbReference>
<dbReference type="SUPFAM" id="SSF55021">
    <property type="entry name" value="ACT-like"/>
    <property type="match status" value="1"/>
</dbReference>
<dbReference type="SUPFAM" id="SSF109604">
    <property type="entry name" value="HD-domain/PDEase-like"/>
    <property type="match status" value="1"/>
</dbReference>
<dbReference type="SUPFAM" id="SSF81301">
    <property type="entry name" value="Nucleotidyltransferase"/>
    <property type="match status" value="1"/>
</dbReference>
<dbReference type="SUPFAM" id="SSF81271">
    <property type="entry name" value="TGS-like"/>
    <property type="match status" value="1"/>
</dbReference>
<dbReference type="PROSITE" id="PS51671">
    <property type="entry name" value="ACT"/>
    <property type="match status" value="1"/>
</dbReference>
<dbReference type="PROSITE" id="PS51831">
    <property type="entry name" value="HD"/>
    <property type="match status" value="1"/>
</dbReference>
<dbReference type="PROSITE" id="PS51880">
    <property type="entry name" value="TGS"/>
    <property type="match status" value="1"/>
</dbReference>